<accession>P37109</accession>
<gene>
    <name type="primary">SPINK4</name>
</gene>
<organism>
    <name type="scientific">Sus scrofa</name>
    <name type="common">Pig</name>
    <dbReference type="NCBI Taxonomy" id="9823"/>
    <lineage>
        <taxon>Eukaryota</taxon>
        <taxon>Metazoa</taxon>
        <taxon>Chordata</taxon>
        <taxon>Craniata</taxon>
        <taxon>Vertebrata</taxon>
        <taxon>Euteleostomi</taxon>
        <taxon>Mammalia</taxon>
        <taxon>Eutheria</taxon>
        <taxon>Laurasiatheria</taxon>
        <taxon>Artiodactyla</taxon>
        <taxon>Suina</taxon>
        <taxon>Suidae</taxon>
        <taxon>Sus</taxon>
    </lineage>
</organism>
<protein>
    <recommendedName>
        <fullName>Serine protease inhibitor Kazal-type 4</fullName>
    </recommendedName>
    <alternativeName>
        <fullName>Peptide PEC-60</fullName>
    </alternativeName>
</protein>
<name>ISK4_PIG</name>
<evidence type="ECO:0000255" key="1">
    <source>
        <dbReference type="PROSITE-ProRule" id="PRU00798"/>
    </source>
</evidence>
<evidence type="ECO:0000269" key="2">
    <source>
    </source>
</evidence>
<evidence type="ECO:0007829" key="3">
    <source>
        <dbReference type="PDB" id="1PCE"/>
    </source>
</evidence>
<reference key="1">
    <citation type="journal article" date="1992" name="J. Biol. Chem.">
        <title>Molecular cloning of PEC-60 and expression of its mRNA and peptide in the gastrointestinal tract and immune system.</title>
        <authorList>
            <person name="Metsis M."/>
            <person name="Cintra A."/>
            <person name="Solfrini V."/>
            <person name="Ernfors P."/>
            <person name="Bortolotti F."/>
            <person name="Morrasutti D.G."/>
            <person name="Oestenson C.-G."/>
            <person name="Efendic S."/>
            <person name="Agerberth B."/>
            <person name="Mutt V."/>
            <person name="Persson H."/>
            <person name="Fuxe K."/>
        </authorList>
    </citation>
    <scope>NUCLEOTIDE SEQUENCE [MRNA]</scope>
</reference>
<reference key="2">
    <citation type="journal article" date="1989" name="Proc. Natl. Acad. Sci. U.S.A.">
        <title>Isolation and characterization of a 60-residue intestinal peptide structurally related to the pancreatic secretory type of trypsin inhibitor: influence on insulin secretion.</title>
        <authorList>
            <person name="Agerberth B."/>
            <person name="Soederling-Barros J."/>
            <person name="Joernvall H."/>
            <person name="Chen Z."/>
            <person name="Oestenson C.G."/>
            <person name="Efendic S."/>
            <person name="Mutt V."/>
        </authorList>
    </citation>
    <scope>PROTEIN SEQUENCE OF 27-86</scope>
    <source>
        <tissue>Intestine</tissue>
    </source>
</reference>
<reference key="3">
    <citation type="journal article" date="1994" name="J. Mol. Biol.">
        <title>Solution structure and dynamics of PEC-60, a protein of the Kazal type inhibitor family, determined by nuclear magnetic resonance spectroscopy.</title>
        <authorList>
            <person name="Liepinsh E."/>
            <person name="Berndt K.D."/>
            <person name="Sillard R."/>
            <person name="Mutt V."/>
            <person name="Otting G."/>
        </authorList>
    </citation>
    <scope>STRUCTURE BY NMR OF 27-86</scope>
</reference>
<proteinExistence type="evidence at protein level"/>
<dbReference type="EMBL" id="S46866">
    <property type="protein sequence ID" value="AAB23691.2"/>
    <property type="molecule type" value="mRNA"/>
</dbReference>
<dbReference type="EMBL" id="X67109">
    <property type="protein sequence ID" value="CAA47482.1"/>
    <property type="molecule type" value="mRNA"/>
</dbReference>
<dbReference type="PIR" id="A44041">
    <property type="entry name" value="A34427"/>
</dbReference>
<dbReference type="RefSeq" id="NP_999029.1">
    <property type="nucleotide sequence ID" value="NM_213864.1"/>
</dbReference>
<dbReference type="PDB" id="1PCE">
    <property type="method" value="NMR"/>
    <property type="chains" value="A=27-86"/>
</dbReference>
<dbReference type="PDBsum" id="1PCE"/>
<dbReference type="SMR" id="P37109"/>
<dbReference type="FunCoup" id="P37109">
    <property type="interactions" value="184"/>
</dbReference>
<dbReference type="STRING" id="9823.ENSSSCP00000011731"/>
<dbReference type="MEROPS" id="I01.970"/>
<dbReference type="PaxDb" id="9823-ENSSSCP00000011731"/>
<dbReference type="PeptideAtlas" id="P37109"/>
<dbReference type="Ensembl" id="ENSSSCT00015066081.1">
    <property type="protein sequence ID" value="ENSSSCP00015026467.1"/>
    <property type="gene ID" value="ENSSSCG00015049625.1"/>
</dbReference>
<dbReference type="Ensembl" id="ENSSSCT00025087573.1">
    <property type="protein sequence ID" value="ENSSSCP00025038171.1"/>
    <property type="gene ID" value="ENSSSCG00025063921.1"/>
</dbReference>
<dbReference type="Ensembl" id="ENSSSCT00030068143.1">
    <property type="protein sequence ID" value="ENSSSCP00030031169.1"/>
    <property type="gene ID" value="ENSSSCG00030048829.1"/>
</dbReference>
<dbReference type="Ensembl" id="ENSSSCT00035001915.1">
    <property type="protein sequence ID" value="ENSSSCP00035000621.1"/>
    <property type="gene ID" value="ENSSSCG00035001542.1"/>
</dbReference>
<dbReference type="Ensembl" id="ENSSSCT00040037502.1">
    <property type="protein sequence ID" value="ENSSSCP00040015616.1"/>
    <property type="gene ID" value="ENSSSCG00040027988.1"/>
</dbReference>
<dbReference type="Ensembl" id="ENSSSCT00045001615.1">
    <property type="protein sequence ID" value="ENSSSCP00045000985.1"/>
    <property type="gene ID" value="ENSSSCG00045001065.1"/>
</dbReference>
<dbReference type="Ensembl" id="ENSSSCT00055028083.1">
    <property type="protein sequence ID" value="ENSSSCP00055022377.1"/>
    <property type="gene ID" value="ENSSSCG00055014267.1"/>
</dbReference>
<dbReference type="Ensembl" id="ENSSSCT00060105096.1">
    <property type="protein sequence ID" value="ENSSSCP00060046118.1"/>
    <property type="gene ID" value="ENSSSCG00060076589.1"/>
</dbReference>
<dbReference type="Ensembl" id="ENSSSCT00065044216.1">
    <property type="protein sequence ID" value="ENSSSCP00065018852.1"/>
    <property type="gene ID" value="ENSSSCG00065032615.1"/>
</dbReference>
<dbReference type="Ensembl" id="ENSSSCT00090024696">
    <property type="protein sequence ID" value="ENSSSCP00090015376"/>
    <property type="gene ID" value="ENSSSCG00090014057"/>
</dbReference>
<dbReference type="Ensembl" id="ENSSSCT00105051656">
    <property type="protein sequence ID" value="ENSSSCP00105036373"/>
    <property type="gene ID" value="ENSSSCG00105027216"/>
</dbReference>
<dbReference type="Ensembl" id="ENSSSCT00110037627">
    <property type="protein sequence ID" value="ENSSSCP00110025851"/>
    <property type="gene ID" value="ENSSSCG00110019641"/>
</dbReference>
<dbReference type="Ensembl" id="ENSSSCT00115015468">
    <property type="protein sequence ID" value="ENSSSCP00115014605"/>
    <property type="gene ID" value="ENSSSCG00115008871"/>
</dbReference>
<dbReference type="Ensembl" id="ENSSSCT00130041085">
    <property type="protein sequence ID" value="ENSSSCP00130028915"/>
    <property type="gene ID" value="ENSSSCG00130021196"/>
</dbReference>
<dbReference type="GeneID" id="396872"/>
<dbReference type="KEGG" id="ssc:396872"/>
<dbReference type="CTD" id="27290"/>
<dbReference type="eggNOG" id="KOG3649">
    <property type="taxonomic scope" value="Eukaryota"/>
</dbReference>
<dbReference type="InParanoid" id="P37109"/>
<dbReference type="OrthoDB" id="126772at2759"/>
<dbReference type="EvolutionaryTrace" id="P37109"/>
<dbReference type="Proteomes" id="UP000008227">
    <property type="component" value="Unplaced"/>
</dbReference>
<dbReference type="Proteomes" id="UP000314985">
    <property type="component" value="Unplaced"/>
</dbReference>
<dbReference type="Proteomes" id="UP000694570">
    <property type="component" value="Unplaced"/>
</dbReference>
<dbReference type="Proteomes" id="UP000694571">
    <property type="component" value="Unplaced"/>
</dbReference>
<dbReference type="Proteomes" id="UP000694720">
    <property type="component" value="Unplaced"/>
</dbReference>
<dbReference type="Proteomes" id="UP000694722">
    <property type="component" value="Unplaced"/>
</dbReference>
<dbReference type="Proteomes" id="UP000694723">
    <property type="component" value="Unplaced"/>
</dbReference>
<dbReference type="Proteomes" id="UP000694724">
    <property type="component" value="Unplaced"/>
</dbReference>
<dbReference type="Proteomes" id="UP000694725">
    <property type="component" value="Unplaced"/>
</dbReference>
<dbReference type="Proteomes" id="UP000694726">
    <property type="component" value="Unplaced"/>
</dbReference>
<dbReference type="Proteomes" id="UP000694727">
    <property type="component" value="Unplaced"/>
</dbReference>
<dbReference type="Proteomes" id="UP000694728">
    <property type="component" value="Unplaced"/>
</dbReference>
<dbReference type="GO" id="GO:0005576">
    <property type="term" value="C:extracellular region"/>
    <property type="evidence" value="ECO:0007669"/>
    <property type="project" value="UniProtKB-SubCell"/>
</dbReference>
<dbReference type="GO" id="GO:0004867">
    <property type="term" value="F:serine-type endopeptidase inhibitor activity"/>
    <property type="evidence" value="ECO:0007669"/>
    <property type="project" value="InterPro"/>
</dbReference>
<dbReference type="CDD" id="cd01327">
    <property type="entry name" value="KAZAL_PSTI"/>
    <property type="match status" value="1"/>
</dbReference>
<dbReference type="Gene3D" id="3.30.60.30">
    <property type="match status" value="1"/>
</dbReference>
<dbReference type="InterPro" id="IPR002350">
    <property type="entry name" value="Kazal_dom"/>
</dbReference>
<dbReference type="InterPro" id="IPR036058">
    <property type="entry name" value="Kazal_dom_sf"/>
</dbReference>
<dbReference type="InterPro" id="IPR039932">
    <property type="entry name" value="Spink4-like"/>
</dbReference>
<dbReference type="PANTHER" id="PTHR21179:SF0">
    <property type="entry name" value="SERINE PROTEASE INHIBITOR KAZAL-TYPE 4"/>
    <property type="match status" value="1"/>
</dbReference>
<dbReference type="PANTHER" id="PTHR21179">
    <property type="entry name" value="SERINE-TYPE ENDOPEPTIDASE INHIBITOR"/>
    <property type="match status" value="1"/>
</dbReference>
<dbReference type="Pfam" id="PF00050">
    <property type="entry name" value="Kazal_1"/>
    <property type="match status" value="1"/>
</dbReference>
<dbReference type="SMART" id="SM00280">
    <property type="entry name" value="KAZAL"/>
    <property type="match status" value="1"/>
</dbReference>
<dbReference type="SUPFAM" id="SSF100895">
    <property type="entry name" value="Kazal-type serine protease inhibitors"/>
    <property type="match status" value="1"/>
</dbReference>
<dbReference type="PROSITE" id="PS00282">
    <property type="entry name" value="KAZAL_1"/>
    <property type="match status" value="1"/>
</dbReference>
<dbReference type="PROSITE" id="PS51465">
    <property type="entry name" value="KAZAL_2"/>
    <property type="match status" value="1"/>
</dbReference>
<feature type="signal peptide" evidence="2">
    <location>
        <begin position="1"/>
        <end position="26"/>
    </location>
</feature>
<feature type="chain" id="PRO_0000016571" description="Serine protease inhibitor Kazal-type 4">
    <location>
        <begin position="27"/>
        <end position="86"/>
    </location>
</feature>
<feature type="domain" description="Kazal-like" evidence="1">
    <location>
        <begin position="31"/>
        <end position="86"/>
    </location>
</feature>
<feature type="site" description="Reactive bond homolog" evidence="1">
    <location>
        <begin position="48"/>
        <end position="49"/>
    </location>
</feature>
<feature type="disulfide bond">
    <location>
        <begin position="37"/>
        <end position="68"/>
    </location>
</feature>
<feature type="disulfide bond">
    <location>
        <begin position="46"/>
        <end position="65"/>
    </location>
</feature>
<feature type="disulfide bond" evidence="1 2">
    <location>
        <begin position="54"/>
        <end position="86"/>
    </location>
</feature>
<feature type="strand" evidence="3">
    <location>
        <begin position="31"/>
        <end position="33"/>
    </location>
</feature>
<feature type="strand" evidence="3">
    <location>
        <begin position="53"/>
        <end position="55"/>
    </location>
</feature>
<feature type="strand" evidence="3">
    <location>
        <begin position="60"/>
        <end position="63"/>
    </location>
</feature>
<feature type="helix" evidence="3">
    <location>
        <begin position="64"/>
        <end position="74"/>
    </location>
</feature>
<feature type="strand" evidence="3">
    <location>
        <begin position="80"/>
        <end position="84"/>
    </location>
</feature>
<keyword id="KW-0002">3D-structure</keyword>
<keyword id="KW-0903">Direct protein sequencing</keyword>
<keyword id="KW-1015">Disulfide bond</keyword>
<keyword id="KW-1185">Reference proteome</keyword>
<keyword id="KW-0964">Secreted</keyword>
<keyword id="KW-0732">Signal</keyword>
<sequence>MAVRLWVVALALAALFIVDREVPVSAEKQVFSRMPICEHMTESPDCSRIYDPVCGTDGVTYESECKLCLARIENKQDIQIVKDGEC</sequence>
<comment type="function">
    <text>Inhibits the glucose-induced insulin secretion from perfused pancreas; also plays a role in the immune system. Does not inhibit trypsin.</text>
</comment>
<comment type="subcellular location">
    <subcellularLocation>
        <location>Secreted</location>
    </subcellularLocation>
</comment>
<comment type="tissue specificity">
    <text>Synthesized in duodenal goblet cells and in monocytes in bone marrow and blood.</text>
</comment>